<gene>
    <name evidence="5" type="primary">MYB306</name>
</gene>
<feature type="chain" id="PRO_0000291259" description="Myb-related protein 306">
    <location>
        <begin position="1"/>
        <end position="316"/>
    </location>
</feature>
<feature type="domain" description="HTH myb-type 1" evidence="2">
    <location>
        <begin position="9"/>
        <end position="65"/>
    </location>
</feature>
<feature type="domain" description="HTH myb-type 2" evidence="2">
    <location>
        <begin position="66"/>
        <end position="116"/>
    </location>
</feature>
<feature type="DNA-binding region" description="H-T-H motif" evidence="2">
    <location>
        <begin position="37"/>
        <end position="61"/>
    </location>
</feature>
<feature type="DNA-binding region" description="H-T-H motif" evidence="2">
    <location>
        <begin position="89"/>
        <end position="112"/>
    </location>
</feature>
<feature type="region of interest" description="Disordered" evidence="3">
    <location>
        <begin position="119"/>
        <end position="144"/>
    </location>
</feature>
<feature type="region of interest" description="Disordered" evidence="3">
    <location>
        <begin position="168"/>
        <end position="193"/>
    </location>
</feature>
<feature type="region of interest" description="Disordered" evidence="3">
    <location>
        <begin position="209"/>
        <end position="230"/>
    </location>
</feature>
<feature type="compositionally biased region" description="Basic and acidic residues" evidence="3">
    <location>
        <begin position="135"/>
        <end position="144"/>
    </location>
</feature>
<feature type="compositionally biased region" description="Polar residues" evidence="3">
    <location>
        <begin position="181"/>
        <end position="193"/>
    </location>
</feature>
<feature type="compositionally biased region" description="Low complexity" evidence="3">
    <location>
        <begin position="216"/>
        <end position="230"/>
    </location>
</feature>
<dbReference type="PIR" id="JQ0956">
    <property type="entry name" value="JQ0956"/>
</dbReference>
<dbReference type="SMR" id="P81392"/>
<dbReference type="GO" id="GO:0005634">
    <property type="term" value="C:nucleus"/>
    <property type="evidence" value="ECO:0007669"/>
    <property type="project" value="UniProtKB-SubCell"/>
</dbReference>
<dbReference type="GO" id="GO:0003677">
    <property type="term" value="F:DNA binding"/>
    <property type="evidence" value="ECO:0007669"/>
    <property type="project" value="UniProtKB-KW"/>
</dbReference>
<dbReference type="GO" id="GO:0009733">
    <property type="term" value="P:response to auxin"/>
    <property type="evidence" value="ECO:0007669"/>
    <property type="project" value="TreeGrafter"/>
</dbReference>
<dbReference type="CDD" id="cd00167">
    <property type="entry name" value="SANT"/>
    <property type="match status" value="2"/>
</dbReference>
<dbReference type="FunFam" id="1.10.10.60:FF:000001">
    <property type="entry name" value="MYB-related transcription factor"/>
    <property type="match status" value="1"/>
</dbReference>
<dbReference type="Gene3D" id="1.10.10.60">
    <property type="entry name" value="Homeodomain-like"/>
    <property type="match status" value="2"/>
</dbReference>
<dbReference type="InterPro" id="IPR009057">
    <property type="entry name" value="Homeodomain-like_sf"/>
</dbReference>
<dbReference type="InterPro" id="IPR017930">
    <property type="entry name" value="Myb_dom"/>
</dbReference>
<dbReference type="InterPro" id="IPR015495">
    <property type="entry name" value="Myb_TF_plants"/>
</dbReference>
<dbReference type="InterPro" id="IPR001005">
    <property type="entry name" value="SANT/Myb"/>
</dbReference>
<dbReference type="PANTHER" id="PTHR10641">
    <property type="entry name" value="MYB FAMILY TRANSCRIPTION FACTOR"/>
    <property type="match status" value="1"/>
</dbReference>
<dbReference type="PANTHER" id="PTHR10641:SF1290">
    <property type="entry name" value="MYB-RELATED PROTEIN 306-LIKE"/>
    <property type="match status" value="1"/>
</dbReference>
<dbReference type="Pfam" id="PF00249">
    <property type="entry name" value="Myb_DNA-binding"/>
    <property type="match status" value="2"/>
</dbReference>
<dbReference type="SMART" id="SM00717">
    <property type="entry name" value="SANT"/>
    <property type="match status" value="2"/>
</dbReference>
<dbReference type="SUPFAM" id="SSF46689">
    <property type="entry name" value="Homeodomain-like"/>
    <property type="match status" value="1"/>
</dbReference>
<dbReference type="PROSITE" id="PS51294">
    <property type="entry name" value="HTH_MYB"/>
    <property type="match status" value="2"/>
</dbReference>
<comment type="function">
    <text evidence="6">Transcription factor.</text>
</comment>
<comment type="subcellular location">
    <subcellularLocation>
        <location evidence="1 2">Nucleus</location>
    </subcellularLocation>
</comment>
<comment type="tissue specificity">
    <text evidence="4">Expressed in flowers, leaves and weakly in seed pods.</text>
</comment>
<comment type="developmental stage">
    <text evidence="4">Expression in flowers increases as the flowers develop.</text>
</comment>
<reference evidence="6" key="1">
    <citation type="journal article" date="1991" name="Plant Cell">
        <title>Expression patterns of myb genes from Antirrhinum flowers.</title>
        <authorList>
            <person name="Jackson D."/>
            <person name="Culianez-Macia F."/>
            <person name="Prescott A.G."/>
            <person name="Roberts K."/>
            <person name="Martin C."/>
        </authorList>
    </citation>
    <scope>NUCLEOTIDE SEQUENCE [MRNA]</scope>
    <scope>TISSUE SPECIFICITY</scope>
    <scope>DEVELOPMENTAL STAGE</scope>
    <source>
        <strain evidence="4">cv. JI:522</strain>
        <tissue evidence="4">Flower bud</tissue>
    </source>
</reference>
<protein>
    <recommendedName>
        <fullName>Myb-related protein 306</fullName>
    </recommendedName>
</protein>
<sequence length="316" mass="35142">MGRPPCCDKIGVKKGPWTPEEDIILVSYIQEHGPGNWRAIPSNTGLLRCSKSCRLRWTNYLRPGIKRGDFTEHEEKMIIHLQALLGNRWAAIASYLPHRTDNDIKNYWNTHLKKKLEKLQSPENGKCQDGNSSVDSDKSVSKGQWERRLQTDIHMAKQALCDALSLDKTSSSTDDPKLSTVQTTQPRPFQASTYSSAENIARLLENWKKKSPVNASSTSQAGSSESTTTSFNYPSVCLSTSSPSEGAISTNFISFNSSNSDILEDHDQAKFEAATNGVNFQDESKPILDNQMPLSLLEKWLLDDSAAVAQGQDVDF</sequence>
<organism>
    <name type="scientific">Antirrhinum majus</name>
    <name type="common">Garden snapdragon</name>
    <dbReference type="NCBI Taxonomy" id="4151"/>
    <lineage>
        <taxon>Eukaryota</taxon>
        <taxon>Viridiplantae</taxon>
        <taxon>Streptophyta</taxon>
        <taxon>Embryophyta</taxon>
        <taxon>Tracheophyta</taxon>
        <taxon>Spermatophyta</taxon>
        <taxon>Magnoliopsida</taxon>
        <taxon>eudicotyledons</taxon>
        <taxon>Gunneridae</taxon>
        <taxon>Pentapetalae</taxon>
        <taxon>asterids</taxon>
        <taxon>lamiids</taxon>
        <taxon>Lamiales</taxon>
        <taxon>Plantaginaceae</taxon>
        <taxon>Antirrhineae</taxon>
        <taxon>Antirrhinum</taxon>
    </lineage>
</organism>
<accession>P81392</accession>
<proteinExistence type="evidence at transcript level"/>
<name>MYB06_ANTMA</name>
<evidence type="ECO:0000250" key="1">
    <source>
        <dbReference type="UniProtKB" id="Q9SEI0"/>
    </source>
</evidence>
<evidence type="ECO:0000255" key="2">
    <source>
        <dbReference type="PROSITE-ProRule" id="PRU00625"/>
    </source>
</evidence>
<evidence type="ECO:0000256" key="3">
    <source>
        <dbReference type="SAM" id="MobiDB-lite"/>
    </source>
</evidence>
<evidence type="ECO:0000269" key="4">
    <source>
    </source>
</evidence>
<evidence type="ECO:0000303" key="5">
    <source>
    </source>
</evidence>
<evidence type="ECO:0000305" key="6"/>
<keyword id="KW-0238">DNA-binding</keyword>
<keyword id="KW-0539">Nucleus</keyword>
<keyword id="KW-0677">Repeat</keyword>
<keyword id="KW-0804">Transcription</keyword>
<keyword id="KW-0805">Transcription regulation</keyword>